<evidence type="ECO:0000255" key="1">
    <source>
        <dbReference type="HAMAP-Rule" id="MF_00281"/>
    </source>
</evidence>
<organism>
    <name type="scientific">Aeromonas salmonicida (strain A449)</name>
    <dbReference type="NCBI Taxonomy" id="382245"/>
    <lineage>
        <taxon>Bacteria</taxon>
        <taxon>Pseudomonadati</taxon>
        <taxon>Pseudomonadota</taxon>
        <taxon>Gammaproteobacteria</taxon>
        <taxon>Aeromonadales</taxon>
        <taxon>Aeromonadaceae</taxon>
        <taxon>Aeromonas</taxon>
    </lineage>
</organism>
<name>SYFA_AERS4</name>
<keyword id="KW-0030">Aminoacyl-tRNA synthetase</keyword>
<keyword id="KW-0067">ATP-binding</keyword>
<keyword id="KW-0963">Cytoplasm</keyword>
<keyword id="KW-0436">Ligase</keyword>
<keyword id="KW-0460">Magnesium</keyword>
<keyword id="KW-0479">Metal-binding</keyword>
<keyword id="KW-0547">Nucleotide-binding</keyword>
<keyword id="KW-0648">Protein biosynthesis</keyword>
<dbReference type="EC" id="6.1.1.20" evidence="1"/>
<dbReference type="EMBL" id="CP000644">
    <property type="protein sequence ID" value="ABO90030.1"/>
    <property type="molecule type" value="Genomic_DNA"/>
</dbReference>
<dbReference type="RefSeq" id="WP_005315542.1">
    <property type="nucleotide sequence ID" value="NC_009348.1"/>
</dbReference>
<dbReference type="SMR" id="A4SMA8"/>
<dbReference type="STRING" id="29491.GCA_000820065_03905"/>
<dbReference type="GeneID" id="79879826"/>
<dbReference type="KEGG" id="asa:ASA_1957"/>
<dbReference type="eggNOG" id="COG0016">
    <property type="taxonomic scope" value="Bacteria"/>
</dbReference>
<dbReference type="HOGENOM" id="CLU_025086_0_1_6"/>
<dbReference type="Proteomes" id="UP000000225">
    <property type="component" value="Chromosome"/>
</dbReference>
<dbReference type="GO" id="GO:0005737">
    <property type="term" value="C:cytoplasm"/>
    <property type="evidence" value="ECO:0007669"/>
    <property type="project" value="UniProtKB-SubCell"/>
</dbReference>
<dbReference type="GO" id="GO:0005524">
    <property type="term" value="F:ATP binding"/>
    <property type="evidence" value="ECO:0007669"/>
    <property type="project" value="UniProtKB-UniRule"/>
</dbReference>
<dbReference type="GO" id="GO:0000287">
    <property type="term" value="F:magnesium ion binding"/>
    <property type="evidence" value="ECO:0007669"/>
    <property type="project" value="UniProtKB-UniRule"/>
</dbReference>
<dbReference type="GO" id="GO:0004826">
    <property type="term" value="F:phenylalanine-tRNA ligase activity"/>
    <property type="evidence" value="ECO:0007669"/>
    <property type="project" value="UniProtKB-UniRule"/>
</dbReference>
<dbReference type="GO" id="GO:0000049">
    <property type="term" value="F:tRNA binding"/>
    <property type="evidence" value="ECO:0007669"/>
    <property type="project" value="InterPro"/>
</dbReference>
<dbReference type="GO" id="GO:0006432">
    <property type="term" value="P:phenylalanyl-tRNA aminoacylation"/>
    <property type="evidence" value="ECO:0007669"/>
    <property type="project" value="UniProtKB-UniRule"/>
</dbReference>
<dbReference type="CDD" id="cd00496">
    <property type="entry name" value="PheRS_alpha_core"/>
    <property type="match status" value="1"/>
</dbReference>
<dbReference type="FunFam" id="3.30.930.10:FF:000003">
    <property type="entry name" value="Phenylalanine--tRNA ligase alpha subunit"/>
    <property type="match status" value="1"/>
</dbReference>
<dbReference type="Gene3D" id="3.30.930.10">
    <property type="entry name" value="Bira Bifunctional Protein, Domain 2"/>
    <property type="match status" value="1"/>
</dbReference>
<dbReference type="HAMAP" id="MF_00281">
    <property type="entry name" value="Phe_tRNA_synth_alpha1"/>
    <property type="match status" value="1"/>
</dbReference>
<dbReference type="InterPro" id="IPR006195">
    <property type="entry name" value="aa-tRNA-synth_II"/>
</dbReference>
<dbReference type="InterPro" id="IPR045864">
    <property type="entry name" value="aa-tRNA-synth_II/BPL/LPL"/>
</dbReference>
<dbReference type="InterPro" id="IPR004529">
    <property type="entry name" value="Phe-tRNA-synth_IIc_asu"/>
</dbReference>
<dbReference type="InterPro" id="IPR004188">
    <property type="entry name" value="Phe-tRNA_ligase_II_N"/>
</dbReference>
<dbReference type="InterPro" id="IPR022911">
    <property type="entry name" value="Phe_tRNA_ligase_alpha1_bac"/>
</dbReference>
<dbReference type="InterPro" id="IPR002319">
    <property type="entry name" value="Phenylalanyl-tRNA_Synthase"/>
</dbReference>
<dbReference type="InterPro" id="IPR010978">
    <property type="entry name" value="tRNA-bd_arm"/>
</dbReference>
<dbReference type="NCBIfam" id="TIGR00468">
    <property type="entry name" value="pheS"/>
    <property type="match status" value="1"/>
</dbReference>
<dbReference type="PANTHER" id="PTHR11538:SF41">
    <property type="entry name" value="PHENYLALANINE--TRNA LIGASE, MITOCHONDRIAL"/>
    <property type="match status" value="1"/>
</dbReference>
<dbReference type="PANTHER" id="PTHR11538">
    <property type="entry name" value="PHENYLALANYL-TRNA SYNTHETASE"/>
    <property type="match status" value="1"/>
</dbReference>
<dbReference type="Pfam" id="PF02912">
    <property type="entry name" value="Phe_tRNA-synt_N"/>
    <property type="match status" value="1"/>
</dbReference>
<dbReference type="Pfam" id="PF01409">
    <property type="entry name" value="tRNA-synt_2d"/>
    <property type="match status" value="1"/>
</dbReference>
<dbReference type="SUPFAM" id="SSF55681">
    <property type="entry name" value="Class II aaRS and biotin synthetases"/>
    <property type="match status" value="1"/>
</dbReference>
<dbReference type="SUPFAM" id="SSF46589">
    <property type="entry name" value="tRNA-binding arm"/>
    <property type="match status" value="1"/>
</dbReference>
<dbReference type="PROSITE" id="PS50862">
    <property type="entry name" value="AA_TRNA_LIGASE_II"/>
    <property type="match status" value="1"/>
</dbReference>
<comment type="catalytic activity">
    <reaction evidence="1">
        <text>tRNA(Phe) + L-phenylalanine + ATP = L-phenylalanyl-tRNA(Phe) + AMP + diphosphate + H(+)</text>
        <dbReference type="Rhea" id="RHEA:19413"/>
        <dbReference type="Rhea" id="RHEA-COMP:9668"/>
        <dbReference type="Rhea" id="RHEA-COMP:9699"/>
        <dbReference type="ChEBI" id="CHEBI:15378"/>
        <dbReference type="ChEBI" id="CHEBI:30616"/>
        <dbReference type="ChEBI" id="CHEBI:33019"/>
        <dbReference type="ChEBI" id="CHEBI:58095"/>
        <dbReference type="ChEBI" id="CHEBI:78442"/>
        <dbReference type="ChEBI" id="CHEBI:78531"/>
        <dbReference type="ChEBI" id="CHEBI:456215"/>
        <dbReference type="EC" id="6.1.1.20"/>
    </reaction>
</comment>
<comment type="cofactor">
    <cofactor evidence="1">
        <name>Mg(2+)</name>
        <dbReference type="ChEBI" id="CHEBI:18420"/>
    </cofactor>
    <text evidence="1">Binds 2 magnesium ions per tetramer.</text>
</comment>
<comment type="subunit">
    <text evidence="1">Tetramer of two alpha and two beta subunits.</text>
</comment>
<comment type="subcellular location">
    <subcellularLocation>
        <location evidence="1">Cytoplasm</location>
    </subcellularLocation>
</comment>
<comment type="similarity">
    <text evidence="1">Belongs to the class-II aminoacyl-tRNA synthetase family. Phe-tRNA synthetase alpha subunit type 1 subfamily.</text>
</comment>
<gene>
    <name evidence="1" type="primary">pheS</name>
    <name type="ordered locus">ASA_1957</name>
</gene>
<sequence length="327" mass="37303">MQQLEEVVGQAKAEIEGVNDVATLDEIRVKYLGKKGFFTEQMKTLGALSAEERPAAGAVINQAKQQVQDALNARRDALVEQELNQKLAAETIDVSLPGRRIENGGLHPVTRTIERIERLFGEMGFKVERGPEIEDGFHNFDALNIPAHHPARTDHDTFYFNPDLMLRTHTSGVQIRTMEHQQPPIRIIAPGRVYRNDYDMTHTPMFHQVEGLLVDEHASFTELKGILHDFLRNYFEEDLTIRFRPSYFPFTEPSAEVDVMGKNGKWLEVLGCGMVHPNVLRSVGIDPEKYSGFAFGMGVERLTMLRYGVNDLRAFFENDLRFLKQFK</sequence>
<accession>A4SMA8</accession>
<proteinExistence type="inferred from homology"/>
<feature type="chain" id="PRO_1000006795" description="Phenylalanine--tRNA ligase alpha subunit">
    <location>
        <begin position="1"/>
        <end position="327"/>
    </location>
</feature>
<feature type="binding site" evidence="1">
    <location>
        <position position="252"/>
    </location>
    <ligand>
        <name>Mg(2+)</name>
        <dbReference type="ChEBI" id="CHEBI:18420"/>
        <note>shared with beta subunit</note>
    </ligand>
</feature>
<reference key="1">
    <citation type="journal article" date="2008" name="BMC Genomics">
        <title>The genome of Aeromonas salmonicida subsp. salmonicida A449: insights into the evolution of a fish pathogen.</title>
        <authorList>
            <person name="Reith M.E."/>
            <person name="Singh R.K."/>
            <person name="Curtis B."/>
            <person name="Boyd J.M."/>
            <person name="Bouevitch A."/>
            <person name="Kimball J."/>
            <person name="Munholland J."/>
            <person name="Murphy C."/>
            <person name="Sarty D."/>
            <person name="Williams J."/>
            <person name="Nash J.H."/>
            <person name="Johnson S.C."/>
            <person name="Brown L.L."/>
        </authorList>
    </citation>
    <scope>NUCLEOTIDE SEQUENCE [LARGE SCALE GENOMIC DNA]</scope>
    <source>
        <strain>A449</strain>
    </source>
</reference>
<protein>
    <recommendedName>
        <fullName evidence="1">Phenylalanine--tRNA ligase alpha subunit</fullName>
        <ecNumber evidence="1">6.1.1.20</ecNumber>
    </recommendedName>
    <alternativeName>
        <fullName evidence="1">Phenylalanyl-tRNA synthetase alpha subunit</fullName>
        <shortName evidence="1">PheRS</shortName>
    </alternativeName>
</protein>